<feature type="chain" id="PRO_1000062682" description="Acetyl-coenzyme A carboxylase carboxyl transferase subunit alpha">
    <location>
        <begin position="1"/>
        <end position="256"/>
    </location>
</feature>
<feature type="domain" description="CoA carboxyltransferase C-terminal" evidence="2">
    <location>
        <begin position="1"/>
        <end position="236"/>
    </location>
</feature>
<reference key="1">
    <citation type="journal article" date="2006" name="Proc. Natl. Acad. Sci. U.S.A.">
        <title>Molecular genetic anatomy of inter- and intraserotype variation in the human bacterial pathogen group A Streptococcus.</title>
        <authorList>
            <person name="Beres S.B."/>
            <person name="Richter E.W."/>
            <person name="Nagiec M.J."/>
            <person name="Sumby P."/>
            <person name="Porcella S.F."/>
            <person name="DeLeo F.R."/>
            <person name="Musser J.M."/>
        </authorList>
    </citation>
    <scope>NUCLEOTIDE SEQUENCE [LARGE SCALE GENOMIC DNA]</scope>
    <source>
        <strain>MGAS2096</strain>
    </source>
</reference>
<name>ACCA_STRPB</name>
<keyword id="KW-0067">ATP-binding</keyword>
<keyword id="KW-0963">Cytoplasm</keyword>
<keyword id="KW-0275">Fatty acid biosynthesis</keyword>
<keyword id="KW-0276">Fatty acid metabolism</keyword>
<keyword id="KW-0444">Lipid biosynthesis</keyword>
<keyword id="KW-0443">Lipid metabolism</keyword>
<keyword id="KW-0547">Nucleotide-binding</keyword>
<keyword id="KW-0808">Transferase</keyword>
<evidence type="ECO:0000255" key="1">
    <source>
        <dbReference type="HAMAP-Rule" id="MF_00823"/>
    </source>
</evidence>
<evidence type="ECO:0000255" key="2">
    <source>
        <dbReference type="PROSITE-ProRule" id="PRU01137"/>
    </source>
</evidence>
<organism>
    <name type="scientific">Streptococcus pyogenes serotype M12 (strain MGAS2096)</name>
    <dbReference type="NCBI Taxonomy" id="370553"/>
    <lineage>
        <taxon>Bacteria</taxon>
        <taxon>Bacillati</taxon>
        <taxon>Bacillota</taxon>
        <taxon>Bacilli</taxon>
        <taxon>Lactobacillales</taxon>
        <taxon>Streptococcaceae</taxon>
        <taxon>Streptococcus</taxon>
    </lineage>
</organism>
<proteinExistence type="inferred from homology"/>
<accession>Q1JA98</accession>
<protein>
    <recommendedName>
        <fullName evidence="1">Acetyl-coenzyme A carboxylase carboxyl transferase subunit alpha</fullName>
        <shortName evidence="1">ACCase subunit alpha</shortName>
        <shortName evidence="1">Acetyl-CoA carboxylase carboxyltransferase subunit alpha</shortName>
        <ecNumber evidence="1">2.1.3.15</ecNumber>
    </recommendedName>
</protein>
<dbReference type="EC" id="2.1.3.15" evidence="1"/>
<dbReference type="EMBL" id="CP000261">
    <property type="protein sequence ID" value="ABF36563.1"/>
    <property type="molecule type" value="Genomic_DNA"/>
</dbReference>
<dbReference type="SMR" id="Q1JA98"/>
<dbReference type="KEGG" id="spj:MGAS2096_Spy1511"/>
<dbReference type="HOGENOM" id="CLU_015486_0_2_9"/>
<dbReference type="UniPathway" id="UPA00655">
    <property type="reaction ID" value="UER00711"/>
</dbReference>
<dbReference type="GO" id="GO:0009317">
    <property type="term" value="C:acetyl-CoA carboxylase complex"/>
    <property type="evidence" value="ECO:0007669"/>
    <property type="project" value="InterPro"/>
</dbReference>
<dbReference type="GO" id="GO:0003989">
    <property type="term" value="F:acetyl-CoA carboxylase activity"/>
    <property type="evidence" value="ECO:0007669"/>
    <property type="project" value="InterPro"/>
</dbReference>
<dbReference type="GO" id="GO:0005524">
    <property type="term" value="F:ATP binding"/>
    <property type="evidence" value="ECO:0007669"/>
    <property type="project" value="UniProtKB-KW"/>
</dbReference>
<dbReference type="GO" id="GO:0016743">
    <property type="term" value="F:carboxyl- or carbamoyltransferase activity"/>
    <property type="evidence" value="ECO:0007669"/>
    <property type="project" value="UniProtKB-UniRule"/>
</dbReference>
<dbReference type="GO" id="GO:0006633">
    <property type="term" value="P:fatty acid biosynthetic process"/>
    <property type="evidence" value="ECO:0007669"/>
    <property type="project" value="UniProtKB-KW"/>
</dbReference>
<dbReference type="GO" id="GO:2001295">
    <property type="term" value="P:malonyl-CoA biosynthetic process"/>
    <property type="evidence" value="ECO:0007669"/>
    <property type="project" value="UniProtKB-UniRule"/>
</dbReference>
<dbReference type="Gene3D" id="3.90.226.10">
    <property type="entry name" value="2-enoyl-CoA Hydratase, Chain A, domain 1"/>
    <property type="match status" value="1"/>
</dbReference>
<dbReference type="HAMAP" id="MF_00823">
    <property type="entry name" value="AcetylCoA_CT_alpha"/>
    <property type="match status" value="1"/>
</dbReference>
<dbReference type="InterPro" id="IPR001095">
    <property type="entry name" value="Acetyl_CoA_COase_a_su"/>
</dbReference>
<dbReference type="InterPro" id="IPR029045">
    <property type="entry name" value="ClpP/crotonase-like_dom_sf"/>
</dbReference>
<dbReference type="InterPro" id="IPR011763">
    <property type="entry name" value="COA_CT_C"/>
</dbReference>
<dbReference type="NCBIfam" id="TIGR00513">
    <property type="entry name" value="accA"/>
    <property type="match status" value="1"/>
</dbReference>
<dbReference type="NCBIfam" id="NF041504">
    <property type="entry name" value="AccA_sub"/>
    <property type="match status" value="1"/>
</dbReference>
<dbReference type="NCBIfam" id="NF004344">
    <property type="entry name" value="PRK05724.1"/>
    <property type="match status" value="1"/>
</dbReference>
<dbReference type="NCBIfam" id="NF008971">
    <property type="entry name" value="PRK12319.1"/>
    <property type="match status" value="1"/>
</dbReference>
<dbReference type="PANTHER" id="PTHR42853">
    <property type="entry name" value="ACETYL-COENZYME A CARBOXYLASE CARBOXYL TRANSFERASE SUBUNIT ALPHA"/>
    <property type="match status" value="1"/>
</dbReference>
<dbReference type="PANTHER" id="PTHR42853:SF3">
    <property type="entry name" value="ACETYL-COENZYME A CARBOXYLASE CARBOXYL TRANSFERASE SUBUNIT ALPHA, CHLOROPLASTIC"/>
    <property type="match status" value="1"/>
</dbReference>
<dbReference type="Pfam" id="PF03255">
    <property type="entry name" value="ACCA"/>
    <property type="match status" value="1"/>
</dbReference>
<dbReference type="PRINTS" id="PR01069">
    <property type="entry name" value="ACCCTRFRASEA"/>
</dbReference>
<dbReference type="SUPFAM" id="SSF52096">
    <property type="entry name" value="ClpP/crotonase"/>
    <property type="match status" value="1"/>
</dbReference>
<dbReference type="PROSITE" id="PS50989">
    <property type="entry name" value="COA_CT_CTER"/>
    <property type="match status" value="1"/>
</dbReference>
<comment type="function">
    <text evidence="1">Component of the acetyl coenzyme A carboxylase (ACC) complex. First, biotin carboxylase catalyzes the carboxylation of biotin on its carrier protein (BCCP) and then the CO(2) group is transferred by the carboxyltransferase to acetyl-CoA to form malonyl-CoA.</text>
</comment>
<comment type="catalytic activity">
    <reaction evidence="1">
        <text>N(6)-carboxybiotinyl-L-lysyl-[protein] + acetyl-CoA = N(6)-biotinyl-L-lysyl-[protein] + malonyl-CoA</text>
        <dbReference type="Rhea" id="RHEA:54728"/>
        <dbReference type="Rhea" id="RHEA-COMP:10505"/>
        <dbReference type="Rhea" id="RHEA-COMP:10506"/>
        <dbReference type="ChEBI" id="CHEBI:57288"/>
        <dbReference type="ChEBI" id="CHEBI:57384"/>
        <dbReference type="ChEBI" id="CHEBI:83144"/>
        <dbReference type="ChEBI" id="CHEBI:83145"/>
        <dbReference type="EC" id="2.1.3.15"/>
    </reaction>
</comment>
<comment type="pathway">
    <text evidence="1">Lipid metabolism; malonyl-CoA biosynthesis; malonyl-CoA from acetyl-CoA: step 1/1.</text>
</comment>
<comment type="subunit">
    <text evidence="1">Acetyl-CoA carboxylase is a heterohexamer composed of biotin carboxyl carrier protein (AccB), biotin carboxylase (AccC) and two subunits each of ACCase subunit alpha (AccA) and ACCase subunit beta (AccD).</text>
</comment>
<comment type="subcellular location">
    <subcellularLocation>
        <location evidence="1">Cytoplasm</location>
    </subcellularLocation>
</comment>
<comment type="similarity">
    <text evidence="1">Belongs to the AccA family.</text>
</comment>
<gene>
    <name evidence="1" type="primary">accA</name>
    <name type="ordered locus">MGAS2096_Spy1511</name>
</gene>
<sequence length="256" mass="28167">MTDVSRVLKEARDQGRLTTLDYANLIFDDFMELHGDRHFSDDGAIVGGLAYLAGQPVTVIGIQKGKNLQDNLARNFGQPNPEGYRKALRLMKQAEKFGRPVVTFINTAGAYPGVGAEERGQGEAIAKNLMEMSDLKVPIIAIIIGEGGSGGALALAVADQVWMLENTMYAVLSPEGFASILWKDGSRATEAAELMKITAGELYKMGIVDRIIPEHGYFSSEIVDIIKANLIEQITSLQAKPLDQLLDERYQRFRKY</sequence>